<dbReference type="EMBL" id="AL123456">
    <property type="protein sequence ID" value="CCP45097.1"/>
    <property type="molecule type" value="Genomic_DNA"/>
</dbReference>
<dbReference type="PIR" id="G70702">
    <property type="entry name" value="G70702"/>
</dbReference>
<dbReference type="RefSeq" id="NP_216826.1">
    <property type="nucleotide sequence ID" value="NC_000962.3"/>
</dbReference>
<dbReference type="RefSeq" id="WP_003411901.1">
    <property type="nucleotide sequence ID" value="NC_000962.3"/>
</dbReference>
<dbReference type="SMR" id="P9WLC3"/>
<dbReference type="STRING" id="83332.Rv2310"/>
<dbReference type="PaxDb" id="83332-Rv2310"/>
<dbReference type="GeneID" id="885175"/>
<dbReference type="KEGG" id="mtu:Rv2310"/>
<dbReference type="KEGG" id="mtv:RVBD_2310"/>
<dbReference type="TubercuList" id="Rv2310"/>
<dbReference type="eggNOG" id="COG3311">
    <property type="taxonomic scope" value="Bacteria"/>
</dbReference>
<dbReference type="InParanoid" id="P9WLC3"/>
<dbReference type="OrthoDB" id="26212at2"/>
<dbReference type="PhylomeDB" id="P9WLC3"/>
<dbReference type="Proteomes" id="UP000001584">
    <property type="component" value="Chromosome"/>
</dbReference>
<dbReference type="GO" id="GO:0003677">
    <property type="term" value="F:DNA binding"/>
    <property type="evidence" value="ECO:0007669"/>
    <property type="project" value="InterPro"/>
</dbReference>
<dbReference type="Gene3D" id="1.10.1660.10">
    <property type="match status" value="1"/>
</dbReference>
<dbReference type="InterPro" id="IPR009061">
    <property type="entry name" value="DNA-bd_dom_put_sf"/>
</dbReference>
<dbReference type="InterPro" id="IPR041657">
    <property type="entry name" value="HTH_17"/>
</dbReference>
<dbReference type="InterPro" id="IPR010093">
    <property type="entry name" value="SinI_DNA-bd"/>
</dbReference>
<dbReference type="NCBIfam" id="TIGR01764">
    <property type="entry name" value="excise"/>
    <property type="match status" value="1"/>
</dbReference>
<dbReference type="Pfam" id="PF12728">
    <property type="entry name" value="HTH_17"/>
    <property type="match status" value="1"/>
</dbReference>
<dbReference type="SUPFAM" id="SSF46955">
    <property type="entry name" value="Putative DNA-binding domain"/>
    <property type="match status" value="1"/>
</dbReference>
<accession>P9WLC3</accession>
<accession>L0TBY0</accession>
<accession>P64987</accession>
<accession>P71902</accession>
<proteinExistence type="predicted"/>
<reference key="1">
    <citation type="journal article" date="1998" name="Nature">
        <title>Deciphering the biology of Mycobacterium tuberculosis from the complete genome sequence.</title>
        <authorList>
            <person name="Cole S.T."/>
            <person name="Brosch R."/>
            <person name="Parkhill J."/>
            <person name="Garnier T."/>
            <person name="Churcher C.M."/>
            <person name="Harris D.E."/>
            <person name="Gordon S.V."/>
            <person name="Eiglmeier K."/>
            <person name="Gas S."/>
            <person name="Barry C.E. III"/>
            <person name="Tekaia F."/>
            <person name="Badcock K."/>
            <person name="Basham D."/>
            <person name="Brown D."/>
            <person name="Chillingworth T."/>
            <person name="Connor R."/>
            <person name="Davies R.M."/>
            <person name="Devlin K."/>
            <person name="Feltwell T."/>
            <person name="Gentles S."/>
            <person name="Hamlin N."/>
            <person name="Holroyd S."/>
            <person name="Hornsby T."/>
            <person name="Jagels K."/>
            <person name="Krogh A."/>
            <person name="McLean J."/>
            <person name="Moule S."/>
            <person name="Murphy L.D."/>
            <person name="Oliver S."/>
            <person name="Osborne J."/>
            <person name="Quail M.A."/>
            <person name="Rajandream M.A."/>
            <person name="Rogers J."/>
            <person name="Rutter S."/>
            <person name="Seeger K."/>
            <person name="Skelton S."/>
            <person name="Squares S."/>
            <person name="Squares R."/>
            <person name="Sulston J.E."/>
            <person name="Taylor K."/>
            <person name="Whitehead S."/>
            <person name="Barrell B.G."/>
        </authorList>
    </citation>
    <scope>NUCLEOTIDE SEQUENCE [LARGE SCALE GENOMIC DNA]</scope>
    <source>
        <strain>ATCC 25618 / H37Rv</strain>
    </source>
</reference>
<organism>
    <name type="scientific">Mycobacterium tuberculosis (strain ATCC 25618 / H37Rv)</name>
    <dbReference type="NCBI Taxonomy" id="83332"/>
    <lineage>
        <taxon>Bacteria</taxon>
        <taxon>Bacillati</taxon>
        <taxon>Actinomycetota</taxon>
        <taxon>Actinomycetes</taxon>
        <taxon>Mycobacteriales</taxon>
        <taxon>Mycobacteriaceae</taxon>
        <taxon>Mycobacterium</taxon>
        <taxon>Mycobacterium tuberculosis complex</taxon>
    </lineage>
</organism>
<protein>
    <recommendedName>
        <fullName>Uncharacterized protein Rv2310</fullName>
    </recommendedName>
</protein>
<gene>
    <name type="ordered locus">Rv2310</name>
    <name type="ORF">MTCY3G12.24c</name>
</gene>
<feature type="chain" id="PRO_0000104018" description="Uncharacterized protein Rv2310">
    <location>
        <begin position="1"/>
        <end position="114"/>
    </location>
</feature>
<sequence length="114" mass="12776">MVAALHAGKAVTIAPQSMTLTTQQAADLLGVSRPTVVRLIKSGELAAERIGNRHRLVLDDVLAYREARRQRQYDALAESAMDIDADEDPEVICEQLREARRVVAARRRTERRRA</sequence>
<keyword id="KW-1185">Reference proteome</keyword>
<name>Y2310_MYCTU</name>